<evidence type="ECO:0000250" key="1">
    <source>
        <dbReference type="UniProtKB" id="P62717"/>
    </source>
</evidence>
<evidence type="ECO:0000269" key="2">
    <source>
    </source>
</evidence>
<evidence type="ECO:0000269" key="3">
    <source>
    </source>
</evidence>
<evidence type="ECO:0000269" key="4">
    <source>
    </source>
</evidence>
<evidence type="ECO:0000303" key="5">
    <source>
    </source>
</evidence>
<evidence type="ECO:0000305" key="6"/>
<evidence type="ECO:0007744" key="7">
    <source>
        <dbReference type="PDB" id="6LQM"/>
    </source>
</evidence>
<evidence type="ECO:0007744" key="8">
    <source>
        <dbReference type="PDB" id="6LSR"/>
    </source>
</evidence>
<evidence type="ECO:0007744" key="9">
    <source>
        <dbReference type="PDB" id="6LSS"/>
    </source>
</evidence>
<evidence type="ECO:0007744" key="10">
    <source>
        <dbReference type="PDB" id="6LU8"/>
    </source>
</evidence>
<evidence type="ECO:0007744" key="11">
    <source>
    </source>
</evidence>
<evidence type="ECO:0007744" key="12">
    <source>
    </source>
</evidence>
<evidence type="ECO:0007744" key="13">
    <source>
    </source>
</evidence>
<evidence type="ECO:0007744" key="14">
    <source>
    </source>
</evidence>
<evidence type="ECO:0007744" key="15">
    <source>
    </source>
</evidence>
<evidence type="ECO:0007744" key="16">
    <source>
    </source>
</evidence>
<evidence type="ECO:0007744" key="17">
    <source>
    </source>
</evidence>
<name>RL18A_HUMAN</name>
<comment type="function">
    <text evidence="3 4">Component of the large ribosomal subunit. The ribosome is a large ribonucleoprotein complex responsible for the synthesis of proteins in the cell.</text>
</comment>
<comment type="subunit">
    <text evidence="2 3 4">Component of the large ribosomal subunit (PubMed:23636399, PubMed:32669547). Binds IPO9 with high affinity (PubMed:11823430).</text>
</comment>
<comment type="interaction">
    <interactant intactId="EBI-350523">
        <id>Q02543</id>
    </interactant>
    <interactant intactId="EBI-348313">
        <id>P36578</id>
        <label>RPL4</label>
    </interactant>
    <organismsDiffer>false</organismsDiffer>
    <experiments>3</experiments>
</comment>
<comment type="subcellular location">
    <subcellularLocation>
        <location evidence="3">Cytoplasm</location>
    </subcellularLocation>
</comment>
<comment type="similarity">
    <text evidence="6">Belongs to the eukaryotic ribosomal protein eL20 family.</text>
</comment>
<comment type="sequence caution" evidence="6">
    <conflict type="frameshift">
        <sequence resource="EMBL-CDS" id="CAA56788"/>
    </conflict>
</comment>
<reference key="1">
    <citation type="submission" date="1992-11" db="EMBL/GenBank/DDBJ databases">
        <authorList>
            <person name="Bhat K.S."/>
        </authorList>
    </citation>
    <scope>NUCLEOTIDE SEQUENCE [MRNA]</scope>
</reference>
<reference key="2">
    <citation type="submission" date="1994-08" db="EMBL/GenBank/DDBJ databases">
        <authorList>
            <person name="Zenz K.I."/>
        </authorList>
    </citation>
    <scope>NUCLEOTIDE SEQUENCE [MRNA]</scope>
</reference>
<reference key="3">
    <citation type="journal article" date="2004" name="Nature">
        <title>The DNA sequence and biology of human chromosome 19.</title>
        <authorList>
            <person name="Grimwood J."/>
            <person name="Gordon L.A."/>
            <person name="Olsen A.S."/>
            <person name="Terry A."/>
            <person name="Schmutz J."/>
            <person name="Lamerdin J.E."/>
            <person name="Hellsten U."/>
            <person name="Goodstein D."/>
            <person name="Couronne O."/>
            <person name="Tran-Gyamfi M."/>
            <person name="Aerts A."/>
            <person name="Altherr M."/>
            <person name="Ashworth L."/>
            <person name="Bajorek E."/>
            <person name="Black S."/>
            <person name="Branscomb E."/>
            <person name="Caenepeel S."/>
            <person name="Carrano A.V."/>
            <person name="Caoile C."/>
            <person name="Chan Y.M."/>
            <person name="Christensen M."/>
            <person name="Cleland C.A."/>
            <person name="Copeland A."/>
            <person name="Dalin E."/>
            <person name="Dehal P."/>
            <person name="Denys M."/>
            <person name="Detter J.C."/>
            <person name="Escobar J."/>
            <person name="Flowers D."/>
            <person name="Fotopulos D."/>
            <person name="Garcia C."/>
            <person name="Georgescu A.M."/>
            <person name="Glavina T."/>
            <person name="Gomez M."/>
            <person name="Gonzales E."/>
            <person name="Groza M."/>
            <person name="Hammon N."/>
            <person name="Hawkins T."/>
            <person name="Haydu L."/>
            <person name="Ho I."/>
            <person name="Huang W."/>
            <person name="Israni S."/>
            <person name="Jett J."/>
            <person name="Kadner K."/>
            <person name="Kimball H."/>
            <person name="Kobayashi A."/>
            <person name="Larionov V."/>
            <person name="Leem S.-H."/>
            <person name="Lopez F."/>
            <person name="Lou Y."/>
            <person name="Lowry S."/>
            <person name="Malfatti S."/>
            <person name="Martinez D."/>
            <person name="McCready P.M."/>
            <person name="Medina C."/>
            <person name="Morgan J."/>
            <person name="Nelson K."/>
            <person name="Nolan M."/>
            <person name="Ovcharenko I."/>
            <person name="Pitluck S."/>
            <person name="Pollard M."/>
            <person name="Popkie A.P."/>
            <person name="Predki P."/>
            <person name="Quan G."/>
            <person name="Ramirez L."/>
            <person name="Rash S."/>
            <person name="Retterer J."/>
            <person name="Rodriguez A."/>
            <person name="Rogers S."/>
            <person name="Salamov A."/>
            <person name="Salazar A."/>
            <person name="She X."/>
            <person name="Smith D."/>
            <person name="Slezak T."/>
            <person name="Solovyev V."/>
            <person name="Thayer N."/>
            <person name="Tice H."/>
            <person name="Tsai M."/>
            <person name="Ustaszewska A."/>
            <person name="Vo N."/>
            <person name="Wagner M."/>
            <person name="Wheeler J."/>
            <person name="Wu K."/>
            <person name="Xie G."/>
            <person name="Yang J."/>
            <person name="Dubchak I."/>
            <person name="Furey T.S."/>
            <person name="DeJong P."/>
            <person name="Dickson M."/>
            <person name="Gordon D."/>
            <person name="Eichler E.E."/>
            <person name="Pennacchio L.A."/>
            <person name="Richardson P."/>
            <person name="Stubbs L."/>
            <person name="Rokhsar D.S."/>
            <person name="Myers R.M."/>
            <person name="Rubin E.M."/>
            <person name="Lucas S.M."/>
        </authorList>
    </citation>
    <scope>NUCLEOTIDE SEQUENCE [LARGE SCALE GENOMIC DNA]</scope>
</reference>
<reference key="4">
    <citation type="journal article" date="2004" name="Genome Res.">
        <title>The status, quality, and expansion of the NIH full-length cDNA project: the Mammalian Gene Collection (MGC).</title>
        <authorList>
            <consortium name="The MGC Project Team"/>
        </authorList>
    </citation>
    <scope>NUCLEOTIDE SEQUENCE [LARGE SCALE MRNA]</scope>
    <source>
        <tissue>Brain</tissue>
        <tissue>Muscle</tissue>
    </source>
</reference>
<reference key="5">
    <citation type="journal article" date="2002" name="EMBO J.">
        <title>Importins fulfill a dual function as nuclear import receptors and cytoplasmic chaperones for exposed basic domains.</title>
        <authorList>
            <person name="Jaekel S."/>
            <person name="Mingot J.-M."/>
            <person name="Schwarzmaier P."/>
            <person name="Hartmann E."/>
            <person name="Goerlich D."/>
        </authorList>
    </citation>
    <scope>INTERACTION WITH IPO9</scope>
</reference>
<reference key="6">
    <citation type="journal article" date="2003" name="Nature">
        <title>Proteomic characterization of the human centrosome by protein correlation profiling.</title>
        <authorList>
            <person name="Andersen J.S."/>
            <person name="Wilkinson C.J."/>
            <person name="Mayor T."/>
            <person name="Mortensen P."/>
            <person name="Nigg E.A."/>
            <person name="Mann M."/>
        </authorList>
    </citation>
    <scope>IDENTIFICATION BY MASS SPECTROMETRY</scope>
    <source>
        <tissue>Lymphoblast</tissue>
    </source>
</reference>
<reference key="7">
    <citation type="journal article" date="2005" name="Nat. Biotechnol.">
        <title>Immunoaffinity profiling of tyrosine phosphorylation in cancer cells.</title>
        <authorList>
            <person name="Rush J."/>
            <person name="Moritz A."/>
            <person name="Lee K.A."/>
            <person name="Guo A."/>
            <person name="Goss V.L."/>
            <person name="Spek E.J."/>
            <person name="Zhang H."/>
            <person name="Zha X.-M."/>
            <person name="Polakiewicz R.D."/>
            <person name="Comb M.J."/>
        </authorList>
    </citation>
    <scope>PHOSPHORYLATION [LARGE SCALE ANALYSIS] AT TYR-63</scope>
    <scope>IDENTIFICATION BY MASS SPECTROMETRY [LARGE SCALE ANALYSIS]</scope>
</reference>
<reference key="8">
    <citation type="journal article" date="2008" name="Proc. Natl. Acad. Sci. U.S.A.">
        <title>A quantitative atlas of mitotic phosphorylation.</title>
        <authorList>
            <person name="Dephoure N."/>
            <person name="Zhou C."/>
            <person name="Villen J."/>
            <person name="Beausoleil S.A."/>
            <person name="Bakalarski C.E."/>
            <person name="Elledge S.J."/>
            <person name="Gygi S.P."/>
        </authorList>
    </citation>
    <scope>PHOSPHORYLATION [LARGE SCALE ANALYSIS] AT SER-71</scope>
    <scope>IDENTIFICATION BY MASS SPECTROMETRY [LARGE SCALE ANALYSIS]</scope>
    <source>
        <tissue>Cervix carcinoma</tissue>
    </source>
</reference>
<reference key="9">
    <citation type="journal article" date="2009" name="Mol. Cell. Proteomics">
        <title>Large-scale proteomics analysis of the human kinome.</title>
        <authorList>
            <person name="Oppermann F.S."/>
            <person name="Gnad F."/>
            <person name="Olsen J.V."/>
            <person name="Hornberger R."/>
            <person name="Greff Z."/>
            <person name="Keri G."/>
            <person name="Mann M."/>
            <person name="Daub H."/>
        </authorList>
    </citation>
    <scope>PHOSPHORYLATION [LARGE SCALE ANALYSIS] AT SER-71</scope>
    <scope>IDENTIFICATION BY MASS SPECTROMETRY [LARGE SCALE ANALYSIS]</scope>
</reference>
<reference key="10">
    <citation type="journal article" date="2009" name="Sci. Signal.">
        <title>Quantitative phosphoproteomic analysis of T cell receptor signaling reveals system-wide modulation of protein-protein interactions.</title>
        <authorList>
            <person name="Mayya V."/>
            <person name="Lundgren D.H."/>
            <person name="Hwang S.-I."/>
            <person name="Rezaul K."/>
            <person name="Wu L."/>
            <person name="Eng J.K."/>
            <person name="Rodionov V."/>
            <person name="Han D.K."/>
        </authorList>
    </citation>
    <scope>PHOSPHORYLATION [LARGE SCALE ANALYSIS] AT SER-71</scope>
    <scope>IDENTIFICATION BY MASS SPECTROMETRY [LARGE SCALE ANALYSIS]</scope>
    <source>
        <tissue>Leukemic T-cell</tissue>
    </source>
</reference>
<reference key="11">
    <citation type="journal article" date="2011" name="BMC Syst. Biol.">
        <title>Initial characterization of the human central proteome.</title>
        <authorList>
            <person name="Burkard T.R."/>
            <person name="Planyavsky M."/>
            <person name="Kaupe I."/>
            <person name="Breitwieser F.P."/>
            <person name="Buerckstuemmer T."/>
            <person name="Bennett K.L."/>
            <person name="Superti-Furga G."/>
            <person name="Colinge J."/>
        </authorList>
    </citation>
    <scope>IDENTIFICATION BY MASS SPECTROMETRY [LARGE SCALE ANALYSIS]</scope>
</reference>
<reference key="12">
    <citation type="journal article" date="2012" name="Proc. Natl. Acad. Sci. U.S.A.">
        <title>N-terminal acetylome analyses and functional insights of the N-terminal acetyltransferase NatB.</title>
        <authorList>
            <person name="Van Damme P."/>
            <person name="Lasa M."/>
            <person name="Polevoda B."/>
            <person name="Gazquez C."/>
            <person name="Elosegui-Artola A."/>
            <person name="Kim D.S."/>
            <person name="De Juan-Pardo E."/>
            <person name="Demeyer K."/>
            <person name="Hole K."/>
            <person name="Larrea E."/>
            <person name="Timmerman E."/>
            <person name="Prieto J."/>
            <person name="Arnesen T."/>
            <person name="Sherman F."/>
            <person name="Gevaert K."/>
            <person name="Aldabe R."/>
        </authorList>
    </citation>
    <scope>IDENTIFICATION BY MASS SPECTROMETRY [LARGE SCALE ANALYSIS]</scope>
</reference>
<reference key="13">
    <citation type="journal article" date="2013" name="J. Proteome Res.">
        <title>Toward a comprehensive characterization of a human cancer cell phosphoproteome.</title>
        <authorList>
            <person name="Zhou H."/>
            <person name="Di Palma S."/>
            <person name="Preisinger C."/>
            <person name="Peng M."/>
            <person name="Polat A.N."/>
            <person name="Heck A.J."/>
            <person name="Mohammed S."/>
        </authorList>
    </citation>
    <scope>PHOSPHORYLATION [LARGE SCALE ANALYSIS] AT SER-71</scope>
    <scope>IDENTIFICATION BY MASS SPECTROMETRY [LARGE SCALE ANALYSIS]</scope>
    <source>
        <tissue>Erythroleukemia</tissue>
    </source>
</reference>
<reference key="14">
    <citation type="journal article" date="2014" name="Curr. Opin. Struct. Biol.">
        <title>A new system for naming ribosomal proteins.</title>
        <authorList>
            <person name="Ban N."/>
            <person name="Beckmann R."/>
            <person name="Cate J.H.D."/>
            <person name="Dinman J.D."/>
            <person name="Dragon F."/>
            <person name="Ellis S.R."/>
            <person name="Lafontaine D.L.J."/>
            <person name="Lindahl L."/>
            <person name="Liljas A."/>
            <person name="Lipton J.M."/>
            <person name="McAlear M.A."/>
            <person name="Moore P.B."/>
            <person name="Noller H.F."/>
            <person name="Ortega J."/>
            <person name="Panse V.G."/>
            <person name="Ramakrishnan V."/>
            <person name="Spahn C.M.T."/>
            <person name="Steitz T.A."/>
            <person name="Tchorzewski M."/>
            <person name="Tollervey D."/>
            <person name="Warren A.J."/>
            <person name="Williamson J.R."/>
            <person name="Wilson D."/>
            <person name="Yonath A."/>
            <person name="Yusupov M."/>
        </authorList>
    </citation>
    <scope>NOMENCLATURE</scope>
</reference>
<reference key="15">
    <citation type="journal article" date="2014" name="Nat. Struct. Mol. Biol.">
        <title>Uncovering global SUMOylation signaling networks in a site-specific manner.</title>
        <authorList>
            <person name="Hendriks I.A."/>
            <person name="D'Souza R.C."/>
            <person name="Yang B."/>
            <person name="Verlaan-de Vries M."/>
            <person name="Mann M."/>
            <person name="Vertegaal A.C."/>
        </authorList>
    </citation>
    <scope>SUMOYLATION [LARGE SCALE ANALYSIS] AT LYS-11</scope>
    <scope>IDENTIFICATION BY MASS SPECTROMETRY [LARGE SCALE ANALYSIS]</scope>
</reference>
<reference key="16">
    <citation type="journal article" date="2015" name="Proteomics">
        <title>N-terminome analysis of the human mitochondrial proteome.</title>
        <authorList>
            <person name="Vaca Jacome A.S."/>
            <person name="Rabilloud T."/>
            <person name="Schaeffer-Reiss C."/>
            <person name="Rompais M."/>
            <person name="Ayoub D."/>
            <person name="Lane L."/>
            <person name="Bairoch A."/>
            <person name="Van Dorsselaer A."/>
            <person name="Carapito C."/>
        </authorList>
    </citation>
    <scope>IDENTIFICATION BY MASS SPECTROMETRY [LARGE SCALE ANALYSIS]</scope>
</reference>
<reference key="17">
    <citation type="journal article" date="2017" name="Nat. Struct. Mol. Biol.">
        <title>Site-specific mapping of the human SUMO proteome reveals co-modification with phosphorylation.</title>
        <authorList>
            <person name="Hendriks I.A."/>
            <person name="Lyon D."/>
            <person name="Young C."/>
            <person name="Jensen L.J."/>
            <person name="Vertegaal A.C."/>
            <person name="Nielsen M.L."/>
        </authorList>
    </citation>
    <scope>SUMOYLATION [LARGE SCALE ANALYSIS] AT LYS-128 AND LYS-170</scope>
    <scope>IDENTIFICATION BY MASS SPECTROMETRY [LARGE SCALE ANALYSIS]</scope>
</reference>
<reference key="18">
    <citation type="journal article" date="2013" name="Nature">
        <title>Structures of the human and Drosophila 80S ribosome.</title>
        <authorList>
            <person name="Anger A.M."/>
            <person name="Armache J.P."/>
            <person name="Berninghausen O."/>
            <person name="Habeck M."/>
            <person name="Subklewe M."/>
            <person name="Wilson D.N."/>
            <person name="Beckmann R."/>
        </authorList>
    </citation>
    <scope>STRUCTURE BY ELECTRON MICROSCOPY (5.0 ANGSTROMS)</scope>
    <scope>FUNCTION</scope>
    <scope>SUBUNIT</scope>
    <scope>SUBCELLULAR LOCATION</scope>
</reference>
<reference evidence="7 8 9 10" key="19">
    <citation type="journal article" date="2020" name="Nat. Commun.">
        <title>Structural snapshots of human pre-60S ribosomal particles before and after nuclear export.</title>
        <authorList>
            <person name="Liang X."/>
            <person name="Zuo M.Q."/>
            <person name="Zhang Y."/>
            <person name="Li N."/>
            <person name="Ma C."/>
            <person name="Dong M.Q."/>
            <person name="Gao N."/>
        </authorList>
    </citation>
    <scope>STRUCTURE BY ELECTRON MICROSCOPY (3.09 ANGSTROMS)</scope>
    <scope>FUNCTION</scope>
    <scope>SUBUNIT</scope>
</reference>
<gene>
    <name type="primary">RPL18A</name>
</gene>
<feature type="chain" id="PRO_0000213925" description="Large ribosomal subunit protein eL20">
    <location>
        <begin position="1"/>
        <end position="176"/>
    </location>
</feature>
<feature type="modified residue" description="Phosphotyrosine" evidence="11">
    <location>
        <position position="63"/>
    </location>
</feature>
<feature type="modified residue" description="Phosphoserine" evidence="12 13 14 15">
    <location>
        <position position="71"/>
    </location>
</feature>
<feature type="modified residue" description="N6-succinyllysine" evidence="1">
    <location>
        <position position="76"/>
    </location>
</feature>
<feature type="modified residue" description="Phosphoserine" evidence="1">
    <location>
        <position position="123"/>
    </location>
</feature>
<feature type="cross-link" description="Glycyl lysine isopeptide (Lys-Gly) (interchain with G-Cter in SUMO2)" evidence="16">
    <location>
        <position position="11"/>
    </location>
</feature>
<feature type="cross-link" description="Glycyl lysine isopeptide (Lys-Gly) (interchain with G-Cter in SUMO2)" evidence="17">
    <location>
        <position position="128"/>
    </location>
</feature>
<feature type="cross-link" description="Glycyl lysine isopeptide (Lys-Gly) (interchain with G-Cter in SUMO2)" evidence="17">
    <location>
        <position position="170"/>
    </location>
</feature>
<feature type="sequence conflict" description="In Ref. 2; CAA56788." evidence="6" ref="2">
    <original>R</original>
    <variation>S</variation>
    <location>
        <position position="83"/>
    </location>
</feature>
<feature type="sequence conflict" description="In Ref. 2; CAA56788." evidence="6" ref="2">
    <original>A</original>
    <variation>V</variation>
    <location>
        <position position="134"/>
    </location>
</feature>
<proteinExistence type="evidence at protein level"/>
<organism>
    <name type="scientific">Homo sapiens</name>
    <name type="common">Human</name>
    <dbReference type="NCBI Taxonomy" id="9606"/>
    <lineage>
        <taxon>Eukaryota</taxon>
        <taxon>Metazoa</taxon>
        <taxon>Chordata</taxon>
        <taxon>Craniata</taxon>
        <taxon>Vertebrata</taxon>
        <taxon>Euteleostomi</taxon>
        <taxon>Mammalia</taxon>
        <taxon>Eutheria</taxon>
        <taxon>Euarchontoglires</taxon>
        <taxon>Primates</taxon>
        <taxon>Haplorrhini</taxon>
        <taxon>Catarrhini</taxon>
        <taxon>Hominidae</taxon>
        <taxon>Homo</taxon>
    </lineage>
</organism>
<keyword id="KW-0002">3D-structure</keyword>
<keyword id="KW-0963">Cytoplasm</keyword>
<keyword id="KW-1017">Isopeptide bond</keyword>
<keyword id="KW-0597">Phosphoprotein</keyword>
<keyword id="KW-1267">Proteomics identification</keyword>
<keyword id="KW-1185">Reference proteome</keyword>
<keyword id="KW-0687">Ribonucleoprotein</keyword>
<keyword id="KW-0689">Ribosomal protein</keyword>
<keyword id="KW-0832">Ubl conjugation</keyword>
<accession>Q02543</accession>
<sequence>MKASGTLREYKVVGRCLPTPKCHTPPLYRMRIFAPNHVVAKSRFWYFVSQLKKMKKSSGEIVYCGQVFEKSPLRVKNFGIWLRYDSRSGTHNMYREYRDLTTAGAVTQCYRDMGARHRARAHSIQIMKVEEIAASKCRRPAVKQFHDSKIKFPLPHRVLRRQHKPRFTTKRPNTFF</sequence>
<protein>
    <recommendedName>
        <fullName evidence="5">Large ribosomal subunit protein eL20</fullName>
    </recommendedName>
    <alternativeName>
        <fullName>60S ribosomal protein L18a</fullName>
    </alternativeName>
</protein>
<dbReference type="EMBL" id="L05093">
    <property type="protein sequence ID" value="AAC18781.1"/>
    <property type="molecule type" value="mRNA"/>
</dbReference>
<dbReference type="EMBL" id="X80822">
    <property type="protein sequence ID" value="CAA56788.1"/>
    <property type="status" value="ALT_FRAME"/>
    <property type="molecule type" value="mRNA"/>
</dbReference>
<dbReference type="EMBL" id="AC005796">
    <property type="protein sequence ID" value="AAC62828.1"/>
    <property type="molecule type" value="Genomic_DNA"/>
</dbReference>
<dbReference type="EMBL" id="BC007512">
    <property type="protein sequence ID" value="AAH07512.1"/>
    <property type="molecule type" value="mRNA"/>
</dbReference>
<dbReference type="EMBL" id="BC066319">
    <property type="protein sequence ID" value="AAH66319.1"/>
    <property type="molecule type" value="mRNA"/>
</dbReference>
<dbReference type="EMBL" id="BC071920">
    <property type="protein sequence ID" value="AAH71920.1"/>
    <property type="molecule type" value="mRNA"/>
</dbReference>
<dbReference type="CCDS" id="CCDS12367.1"/>
<dbReference type="PIR" id="S47353">
    <property type="entry name" value="S47353"/>
</dbReference>
<dbReference type="RefSeq" id="NP_000971.1">
    <property type="nucleotide sequence ID" value="NM_000980.4"/>
</dbReference>
<dbReference type="PDB" id="4UG0">
    <property type="method" value="EM"/>
    <property type="chains" value="LS=1-176"/>
</dbReference>
<dbReference type="PDB" id="4V6X">
    <property type="method" value="EM"/>
    <property type="resolution" value="5.00 A"/>
    <property type="chains" value="CS=1-176"/>
</dbReference>
<dbReference type="PDB" id="5AJ0">
    <property type="method" value="EM"/>
    <property type="resolution" value="3.50 A"/>
    <property type="chains" value="AS=1-176"/>
</dbReference>
<dbReference type="PDB" id="5LKS">
    <property type="method" value="EM"/>
    <property type="resolution" value="3.60 A"/>
    <property type="chains" value="LS=1-176"/>
</dbReference>
<dbReference type="PDB" id="5T2C">
    <property type="method" value="EM"/>
    <property type="resolution" value="3.60 A"/>
    <property type="chains" value="M=1-176"/>
</dbReference>
<dbReference type="PDB" id="6IP5">
    <property type="method" value="EM"/>
    <property type="resolution" value="3.90 A"/>
    <property type="chains" value="2M=1-176"/>
</dbReference>
<dbReference type="PDB" id="6IP6">
    <property type="method" value="EM"/>
    <property type="resolution" value="4.50 A"/>
    <property type="chains" value="2M=1-176"/>
</dbReference>
<dbReference type="PDB" id="6IP8">
    <property type="method" value="EM"/>
    <property type="resolution" value="3.90 A"/>
    <property type="chains" value="2M=1-176"/>
</dbReference>
<dbReference type="PDB" id="6LQM">
    <property type="method" value="EM"/>
    <property type="resolution" value="3.09 A"/>
    <property type="chains" value="b=1-176"/>
</dbReference>
<dbReference type="PDB" id="6LSR">
    <property type="method" value="EM"/>
    <property type="resolution" value="3.13 A"/>
    <property type="chains" value="b=1-176"/>
</dbReference>
<dbReference type="PDB" id="6LSS">
    <property type="method" value="EM"/>
    <property type="resolution" value="3.23 A"/>
    <property type="chains" value="b=1-176"/>
</dbReference>
<dbReference type="PDB" id="6LU8">
    <property type="method" value="EM"/>
    <property type="resolution" value="3.13 A"/>
    <property type="chains" value="b=1-176"/>
</dbReference>
<dbReference type="PDB" id="6OLE">
    <property type="method" value="EM"/>
    <property type="resolution" value="3.10 A"/>
    <property type="chains" value="T=1-175"/>
</dbReference>
<dbReference type="PDB" id="6OLF">
    <property type="method" value="EM"/>
    <property type="resolution" value="3.90 A"/>
    <property type="chains" value="T=1-175"/>
</dbReference>
<dbReference type="PDB" id="6OLG">
    <property type="method" value="EM"/>
    <property type="resolution" value="3.40 A"/>
    <property type="chains" value="AS=1-175"/>
</dbReference>
<dbReference type="PDB" id="6OLI">
    <property type="method" value="EM"/>
    <property type="resolution" value="3.50 A"/>
    <property type="chains" value="T=1-175"/>
</dbReference>
<dbReference type="PDB" id="6OLZ">
    <property type="method" value="EM"/>
    <property type="resolution" value="3.90 A"/>
    <property type="chains" value="AS=1-175"/>
</dbReference>
<dbReference type="PDB" id="6OM0">
    <property type="method" value="EM"/>
    <property type="resolution" value="3.10 A"/>
    <property type="chains" value="T=1-175"/>
</dbReference>
<dbReference type="PDB" id="6OM7">
    <property type="method" value="EM"/>
    <property type="resolution" value="3.70 A"/>
    <property type="chains" value="T=1-175"/>
</dbReference>
<dbReference type="PDB" id="6QZP">
    <property type="method" value="EM"/>
    <property type="resolution" value="2.90 A"/>
    <property type="chains" value="LS=2-176"/>
</dbReference>
<dbReference type="PDB" id="6W6L">
    <property type="method" value="EM"/>
    <property type="resolution" value="3.84 A"/>
    <property type="chains" value="T=1-176"/>
</dbReference>
<dbReference type="PDB" id="6XA1">
    <property type="method" value="EM"/>
    <property type="resolution" value="2.80 A"/>
    <property type="chains" value="LS=2-176"/>
</dbReference>
<dbReference type="PDB" id="6Y0G">
    <property type="method" value="EM"/>
    <property type="resolution" value="3.20 A"/>
    <property type="chains" value="LS=1-176"/>
</dbReference>
<dbReference type="PDB" id="6Y2L">
    <property type="method" value="EM"/>
    <property type="resolution" value="3.00 A"/>
    <property type="chains" value="LS=1-176"/>
</dbReference>
<dbReference type="PDB" id="6Y57">
    <property type="method" value="EM"/>
    <property type="resolution" value="3.50 A"/>
    <property type="chains" value="LS=1-176"/>
</dbReference>
<dbReference type="PDB" id="6Y6X">
    <property type="method" value="EM"/>
    <property type="resolution" value="2.80 A"/>
    <property type="chains" value="LS=2-176"/>
</dbReference>
<dbReference type="PDB" id="6Z6L">
    <property type="method" value="EM"/>
    <property type="resolution" value="3.00 A"/>
    <property type="chains" value="LS=1-176"/>
</dbReference>
<dbReference type="PDB" id="6Z6M">
    <property type="method" value="EM"/>
    <property type="resolution" value="3.10 A"/>
    <property type="chains" value="LS=1-176"/>
</dbReference>
<dbReference type="PDB" id="6Z6N">
    <property type="method" value="EM"/>
    <property type="resolution" value="2.90 A"/>
    <property type="chains" value="LS=1-176"/>
</dbReference>
<dbReference type="PDB" id="6ZM7">
    <property type="method" value="EM"/>
    <property type="resolution" value="2.70 A"/>
    <property type="chains" value="LS=1-176"/>
</dbReference>
<dbReference type="PDB" id="6ZME">
    <property type="method" value="EM"/>
    <property type="resolution" value="3.00 A"/>
    <property type="chains" value="LS=1-176"/>
</dbReference>
<dbReference type="PDB" id="6ZMI">
    <property type="method" value="EM"/>
    <property type="resolution" value="2.60 A"/>
    <property type="chains" value="LS=1-176"/>
</dbReference>
<dbReference type="PDB" id="6ZMO">
    <property type="method" value="EM"/>
    <property type="resolution" value="3.10 A"/>
    <property type="chains" value="LS=1-176"/>
</dbReference>
<dbReference type="PDB" id="7BHP">
    <property type="method" value="EM"/>
    <property type="resolution" value="3.30 A"/>
    <property type="chains" value="LS=1-176"/>
</dbReference>
<dbReference type="PDB" id="7F5S">
    <property type="method" value="EM"/>
    <property type="resolution" value="2.72 A"/>
    <property type="chains" value="LS=1-176"/>
</dbReference>
<dbReference type="PDB" id="7OW7">
    <property type="method" value="EM"/>
    <property type="resolution" value="2.20 A"/>
    <property type="chains" value="M=1-176"/>
</dbReference>
<dbReference type="PDB" id="7QVP">
    <property type="method" value="EM"/>
    <property type="resolution" value="3.00 A"/>
    <property type="chains" value="LS/MS=1-176"/>
</dbReference>
<dbReference type="PDB" id="7XNX">
    <property type="method" value="EM"/>
    <property type="resolution" value="2.70 A"/>
    <property type="chains" value="LS=1-176"/>
</dbReference>
<dbReference type="PDB" id="7XNY">
    <property type="method" value="EM"/>
    <property type="resolution" value="2.50 A"/>
    <property type="chains" value="LS=1-176"/>
</dbReference>
<dbReference type="PDB" id="8A3D">
    <property type="method" value="EM"/>
    <property type="resolution" value="1.67 A"/>
    <property type="chains" value="M=1-176"/>
</dbReference>
<dbReference type="PDB" id="8FKP">
    <property type="method" value="EM"/>
    <property type="resolution" value="2.85 A"/>
    <property type="chains" value="LC=1-176"/>
</dbReference>
<dbReference type="PDB" id="8FKQ">
    <property type="method" value="EM"/>
    <property type="resolution" value="2.76 A"/>
    <property type="chains" value="LC=1-176"/>
</dbReference>
<dbReference type="PDB" id="8FKR">
    <property type="method" value="EM"/>
    <property type="resolution" value="2.89 A"/>
    <property type="chains" value="LC=1-176"/>
</dbReference>
<dbReference type="PDB" id="8FKS">
    <property type="method" value="EM"/>
    <property type="resolution" value="2.88 A"/>
    <property type="chains" value="LC=1-176"/>
</dbReference>
<dbReference type="PDB" id="8FKT">
    <property type="method" value="EM"/>
    <property type="resolution" value="2.81 A"/>
    <property type="chains" value="LC=1-176"/>
</dbReference>
<dbReference type="PDB" id="8FKU">
    <property type="method" value="EM"/>
    <property type="resolution" value="2.82 A"/>
    <property type="chains" value="LC=1-176"/>
</dbReference>
<dbReference type="PDB" id="8FKV">
    <property type="method" value="EM"/>
    <property type="resolution" value="2.47 A"/>
    <property type="chains" value="LC=1-176"/>
</dbReference>
<dbReference type="PDB" id="8FKW">
    <property type="method" value="EM"/>
    <property type="resolution" value="2.50 A"/>
    <property type="chains" value="LC=1-176"/>
</dbReference>
<dbReference type="PDB" id="8FKX">
    <property type="method" value="EM"/>
    <property type="resolution" value="2.59 A"/>
    <property type="chains" value="LC=1-176"/>
</dbReference>
<dbReference type="PDB" id="8FKY">
    <property type="method" value="EM"/>
    <property type="resolution" value="2.67 A"/>
    <property type="chains" value="LC=1-176"/>
</dbReference>
<dbReference type="PDB" id="8FKZ">
    <property type="method" value="EM"/>
    <property type="resolution" value="3.04 A"/>
    <property type="chains" value="LC=1-176"/>
</dbReference>
<dbReference type="PDB" id="8FL0">
    <property type="method" value="EM"/>
    <property type="resolution" value="2.91 A"/>
    <property type="chains" value="LC=1-176"/>
</dbReference>
<dbReference type="PDB" id="8FL2">
    <property type="method" value="EM"/>
    <property type="resolution" value="2.67 A"/>
    <property type="chains" value="LC=1-176"/>
</dbReference>
<dbReference type="PDB" id="8FL3">
    <property type="method" value="EM"/>
    <property type="resolution" value="2.53 A"/>
    <property type="chains" value="LC=1-176"/>
</dbReference>
<dbReference type="PDB" id="8FL4">
    <property type="method" value="EM"/>
    <property type="resolution" value="2.89 A"/>
    <property type="chains" value="LC=1-176"/>
</dbReference>
<dbReference type="PDB" id="8FL6">
    <property type="method" value="EM"/>
    <property type="resolution" value="2.62 A"/>
    <property type="chains" value="LC=1-176"/>
</dbReference>
<dbReference type="PDB" id="8FL7">
    <property type="method" value="EM"/>
    <property type="resolution" value="2.55 A"/>
    <property type="chains" value="LC=1-176"/>
</dbReference>
<dbReference type="PDB" id="8FL9">
    <property type="method" value="EM"/>
    <property type="resolution" value="2.75 A"/>
    <property type="chains" value="LC=1-176"/>
</dbReference>
<dbReference type="PDB" id="8FLA">
    <property type="method" value="EM"/>
    <property type="resolution" value="2.63 A"/>
    <property type="chains" value="LC=1-176"/>
</dbReference>
<dbReference type="PDB" id="8FLB">
    <property type="method" value="EM"/>
    <property type="resolution" value="2.55 A"/>
    <property type="chains" value="LC=1-176"/>
</dbReference>
<dbReference type="PDB" id="8FLC">
    <property type="method" value="EM"/>
    <property type="resolution" value="2.76 A"/>
    <property type="chains" value="LC=1-176"/>
</dbReference>
<dbReference type="PDB" id="8FLD">
    <property type="method" value="EM"/>
    <property type="resolution" value="2.58 A"/>
    <property type="chains" value="LC=1-176"/>
</dbReference>
<dbReference type="PDB" id="8FLE">
    <property type="method" value="EM"/>
    <property type="resolution" value="2.48 A"/>
    <property type="chains" value="LC=1-176"/>
</dbReference>
<dbReference type="PDB" id="8FLF">
    <property type="method" value="EM"/>
    <property type="resolution" value="2.65 A"/>
    <property type="chains" value="LC=1-176"/>
</dbReference>
<dbReference type="PDB" id="8G5Y">
    <property type="method" value="EM"/>
    <property type="resolution" value="2.29 A"/>
    <property type="chains" value="LS=1-176"/>
</dbReference>
<dbReference type="PDB" id="8G5Z">
    <property type="method" value="EM"/>
    <property type="resolution" value="2.64 A"/>
    <property type="chains" value="LS=1-176"/>
</dbReference>
<dbReference type="PDB" id="8G60">
    <property type="method" value="EM"/>
    <property type="resolution" value="2.54 A"/>
    <property type="chains" value="LS=1-176"/>
</dbReference>
<dbReference type="PDB" id="8G61">
    <property type="method" value="EM"/>
    <property type="resolution" value="2.94 A"/>
    <property type="chains" value="LS=1-176"/>
</dbReference>
<dbReference type="PDB" id="8G6J">
    <property type="method" value="EM"/>
    <property type="resolution" value="2.80 A"/>
    <property type="chains" value="LS=1-176"/>
</dbReference>
<dbReference type="PDB" id="8GLP">
    <property type="method" value="EM"/>
    <property type="resolution" value="1.67 A"/>
    <property type="chains" value="LS=1-176"/>
</dbReference>
<dbReference type="PDB" id="8IDT">
    <property type="method" value="EM"/>
    <property type="resolution" value="2.80 A"/>
    <property type="chains" value="b=1-176"/>
</dbReference>
<dbReference type="PDB" id="8IDY">
    <property type="method" value="EM"/>
    <property type="resolution" value="3.00 A"/>
    <property type="chains" value="b=1-176"/>
</dbReference>
<dbReference type="PDB" id="8IE3">
    <property type="method" value="EM"/>
    <property type="resolution" value="3.30 A"/>
    <property type="chains" value="b=1-176"/>
</dbReference>
<dbReference type="PDB" id="8IFD">
    <property type="method" value="EM"/>
    <property type="resolution" value="2.59 A"/>
    <property type="chains" value="2M=1-176"/>
</dbReference>
<dbReference type="PDB" id="8IFE">
    <property type="method" value="EM"/>
    <property type="resolution" value="2.57 A"/>
    <property type="chains" value="2M=1-176"/>
</dbReference>
<dbReference type="PDB" id="8INE">
    <property type="method" value="EM"/>
    <property type="resolution" value="3.20 A"/>
    <property type="chains" value="b=1-176"/>
</dbReference>
<dbReference type="PDB" id="8INF">
    <property type="method" value="EM"/>
    <property type="resolution" value="3.00 A"/>
    <property type="chains" value="b=1-176"/>
</dbReference>
<dbReference type="PDB" id="8INK">
    <property type="method" value="EM"/>
    <property type="resolution" value="3.20 A"/>
    <property type="chains" value="b=1-176"/>
</dbReference>
<dbReference type="PDB" id="8IPD">
    <property type="method" value="EM"/>
    <property type="resolution" value="3.20 A"/>
    <property type="chains" value="b=1-176"/>
</dbReference>
<dbReference type="PDB" id="8IPX">
    <property type="method" value="EM"/>
    <property type="resolution" value="4.30 A"/>
    <property type="chains" value="b=1-176"/>
</dbReference>
<dbReference type="PDB" id="8IPY">
    <property type="method" value="EM"/>
    <property type="resolution" value="3.20 A"/>
    <property type="chains" value="b=1-176"/>
</dbReference>
<dbReference type="PDB" id="8IR1">
    <property type="method" value="EM"/>
    <property type="resolution" value="3.30 A"/>
    <property type="chains" value="b=1-176"/>
</dbReference>
<dbReference type="PDB" id="8IR3">
    <property type="method" value="EM"/>
    <property type="resolution" value="3.50 A"/>
    <property type="chains" value="b=1-176"/>
</dbReference>
<dbReference type="PDB" id="8JDJ">
    <property type="method" value="EM"/>
    <property type="resolution" value="2.50 A"/>
    <property type="chains" value="X=1-176"/>
</dbReference>
<dbReference type="PDB" id="8JDK">
    <property type="method" value="EM"/>
    <property type="resolution" value="2.26 A"/>
    <property type="chains" value="X=1-176"/>
</dbReference>
<dbReference type="PDB" id="8JDL">
    <property type="method" value="EM"/>
    <property type="resolution" value="2.42 A"/>
    <property type="chains" value="X=1-176"/>
</dbReference>
<dbReference type="PDB" id="8JDM">
    <property type="method" value="EM"/>
    <property type="resolution" value="2.67 A"/>
    <property type="chains" value="X=1-176"/>
</dbReference>
<dbReference type="PDB" id="8K2C">
    <property type="method" value="EM"/>
    <property type="resolution" value="2.40 A"/>
    <property type="chains" value="LS=1-176"/>
</dbReference>
<dbReference type="PDB" id="8OHD">
    <property type="method" value="EM"/>
    <property type="resolution" value="3.10 A"/>
    <property type="chains" value="LS=1-176"/>
</dbReference>
<dbReference type="PDB" id="8OJ0">
    <property type="method" value="EM"/>
    <property type="resolution" value="3.30 A"/>
    <property type="chains" value="LS=1-176"/>
</dbReference>
<dbReference type="PDB" id="8OJ5">
    <property type="method" value="EM"/>
    <property type="resolution" value="2.90 A"/>
    <property type="chains" value="LS=1-176"/>
</dbReference>
<dbReference type="PDB" id="8OJ8">
    <property type="method" value="EM"/>
    <property type="resolution" value="3.30 A"/>
    <property type="chains" value="LS=1-176"/>
</dbReference>
<dbReference type="PDB" id="8QFD">
    <property type="method" value="EM"/>
    <property type="resolution" value="2.20 A"/>
    <property type="chains" value="S=1-176"/>
</dbReference>
<dbReference type="PDB" id="8QOI">
    <property type="method" value="EM"/>
    <property type="resolution" value="1.90 A"/>
    <property type="chains" value="LS=1-176"/>
</dbReference>
<dbReference type="PDB" id="8QYX">
    <property type="method" value="EM"/>
    <property type="resolution" value="1.78 A"/>
    <property type="chains" value="M1=1-176"/>
</dbReference>
<dbReference type="PDB" id="8RL2">
    <property type="method" value="EM"/>
    <property type="resolution" value="2.84 A"/>
    <property type="chains" value="LS=1-176"/>
</dbReference>
<dbReference type="PDB" id="8UKB">
    <property type="method" value="EM"/>
    <property type="resolution" value="3.05 A"/>
    <property type="chains" value="LS=2-176"/>
</dbReference>
<dbReference type="PDB" id="8XSX">
    <property type="method" value="EM"/>
    <property type="resolution" value="2.40 A"/>
    <property type="chains" value="LS=1-176"/>
</dbReference>
<dbReference type="PDB" id="8XSY">
    <property type="method" value="EM"/>
    <property type="resolution" value="3.00 A"/>
    <property type="chains" value="LS=1-176"/>
</dbReference>
<dbReference type="PDB" id="8XSZ">
    <property type="method" value="EM"/>
    <property type="resolution" value="3.20 A"/>
    <property type="chains" value="LS=1-176"/>
</dbReference>
<dbReference type="PDB" id="8Y0W">
    <property type="method" value="EM"/>
    <property type="resolution" value="3.40 A"/>
    <property type="chains" value="LS=1-176"/>
</dbReference>
<dbReference type="PDB" id="8Y0X">
    <property type="method" value="EM"/>
    <property type="resolution" value="3.30 A"/>
    <property type="chains" value="LS=1-176"/>
</dbReference>
<dbReference type="PDB" id="8YOO">
    <property type="method" value="EM"/>
    <property type="resolution" value="2.00 A"/>
    <property type="chains" value="LS=1-176"/>
</dbReference>
<dbReference type="PDB" id="8YOP">
    <property type="method" value="EM"/>
    <property type="resolution" value="2.20 A"/>
    <property type="chains" value="LS=1-176"/>
</dbReference>
<dbReference type="PDB" id="9C3H">
    <property type="method" value="EM"/>
    <property type="resolution" value="2.00 A"/>
    <property type="chains" value="LS=1-176"/>
</dbReference>
<dbReference type="PDB" id="9G8M">
    <property type="method" value="EM"/>
    <property type="resolution" value="3.30 A"/>
    <property type="chains" value="LS=1-176"/>
</dbReference>
<dbReference type="PDB" id="9GMO">
    <property type="method" value="EM"/>
    <property type="resolution" value="2.59 A"/>
    <property type="chains" value="M=1-176"/>
</dbReference>
<dbReference type="PDBsum" id="4UG0"/>
<dbReference type="PDBsum" id="4V6X"/>
<dbReference type="PDBsum" id="5AJ0"/>
<dbReference type="PDBsum" id="5LKS"/>
<dbReference type="PDBsum" id="5T2C"/>
<dbReference type="PDBsum" id="6IP5"/>
<dbReference type="PDBsum" id="6IP6"/>
<dbReference type="PDBsum" id="6IP8"/>
<dbReference type="PDBsum" id="6LQM"/>
<dbReference type="PDBsum" id="6LSR"/>
<dbReference type="PDBsum" id="6LSS"/>
<dbReference type="PDBsum" id="6LU8"/>
<dbReference type="PDBsum" id="6OLE"/>
<dbReference type="PDBsum" id="6OLF"/>
<dbReference type="PDBsum" id="6OLG"/>
<dbReference type="PDBsum" id="6OLI"/>
<dbReference type="PDBsum" id="6OLZ"/>
<dbReference type="PDBsum" id="6OM0"/>
<dbReference type="PDBsum" id="6OM7"/>
<dbReference type="PDBsum" id="6QZP"/>
<dbReference type="PDBsum" id="6W6L"/>
<dbReference type="PDBsum" id="6XA1"/>
<dbReference type="PDBsum" id="6Y0G"/>
<dbReference type="PDBsum" id="6Y2L"/>
<dbReference type="PDBsum" id="6Y57"/>
<dbReference type="PDBsum" id="6Y6X"/>
<dbReference type="PDBsum" id="6Z6L"/>
<dbReference type="PDBsum" id="6Z6M"/>
<dbReference type="PDBsum" id="6Z6N"/>
<dbReference type="PDBsum" id="6ZM7"/>
<dbReference type="PDBsum" id="6ZME"/>
<dbReference type="PDBsum" id="6ZMI"/>
<dbReference type="PDBsum" id="6ZMO"/>
<dbReference type="PDBsum" id="7BHP"/>
<dbReference type="PDBsum" id="7F5S"/>
<dbReference type="PDBsum" id="7OW7"/>
<dbReference type="PDBsum" id="7QVP"/>
<dbReference type="PDBsum" id="7XNX"/>
<dbReference type="PDBsum" id="7XNY"/>
<dbReference type="PDBsum" id="8A3D"/>
<dbReference type="PDBsum" id="8FKP"/>
<dbReference type="PDBsum" id="8FKQ"/>
<dbReference type="PDBsum" id="8FKR"/>
<dbReference type="PDBsum" id="8FKS"/>
<dbReference type="PDBsum" id="8FKT"/>
<dbReference type="PDBsum" id="8FKU"/>
<dbReference type="PDBsum" id="8FKV"/>
<dbReference type="PDBsum" id="8FKW"/>
<dbReference type="PDBsum" id="8FKX"/>
<dbReference type="PDBsum" id="8FKY"/>
<dbReference type="PDBsum" id="8FKZ"/>
<dbReference type="PDBsum" id="8FL0"/>
<dbReference type="PDBsum" id="8FL2"/>
<dbReference type="PDBsum" id="8FL3"/>
<dbReference type="PDBsum" id="8FL4"/>
<dbReference type="PDBsum" id="8FL6"/>
<dbReference type="PDBsum" id="8FL7"/>
<dbReference type="PDBsum" id="8FL9"/>
<dbReference type="PDBsum" id="8FLA"/>
<dbReference type="PDBsum" id="8FLB"/>
<dbReference type="PDBsum" id="8FLC"/>
<dbReference type="PDBsum" id="8FLD"/>
<dbReference type="PDBsum" id="8FLE"/>
<dbReference type="PDBsum" id="8FLF"/>
<dbReference type="PDBsum" id="8G5Y"/>
<dbReference type="PDBsum" id="8G5Z"/>
<dbReference type="PDBsum" id="8G60"/>
<dbReference type="PDBsum" id="8G61"/>
<dbReference type="PDBsum" id="8G6J"/>
<dbReference type="PDBsum" id="8GLP"/>
<dbReference type="PDBsum" id="8IDT"/>
<dbReference type="PDBsum" id="8IDY"/>
<dbReference type="PDBsum" id="8IE3"/>
<dbReference type="PDBsum" id="8IFD"/>
<dbReference type="PDBsum" id="8IFE"/>
<dbReference type="PDBsum" id="8INE"/>
<dbReference type="PDBsum" id="8INF"/>
<dbReference type="PDBsum" id="8INK"/>
<dbReference type="PDBsum" id="8IPD"/>
<dbReference type="PDBsum" id="8IPX"/>
<dbReference type="PDBsum" id="8IPY"/>
<dbReference type="PDBsum" id="8IR1"/>
<dbReference type="PDBsum" id="8IR3"/>
<dbReference type="PDBsum" id="8JDJ"/>
<dbReference type="PDBsum" id="8JDK"/>
<dbReference type="PDBsum" id="8JDL"/>
<dbReference type="PDBsum" id="8JDM"/>
<dbReference type="PDBsum" id="8K2C"/>
<dbReference type="PDBsum" id="8OHD"/>
<dbReference type="PDBsum" id="8OJ0"/>
<dbReference type="PDBsum" id="8OJ5"/>
<dbReference type="PDBsum" id="8OJ8"/>
<dbReference type="PDBsum" id="8QFD"/>
<dbReference type="PDBsum" id="8QOI"/>
<dbReference type="PDBsum" id="8QYX"/>
<dbReference type="PDBsum" id="8RL2"/>
<dbReference type="PDBsum" id="8UKB"/>
<dbReference type="PDBsum" id="8XSX"/>
<dbReference type="PDBsum" id="8XSY"/>
<dbReference type="PDBsum" id="8XSZ"/>
<dbReference type="PDBsum" id="8Y0W"/>
<dbReference type="PDBsum" id="8Y0X"/>
<dbReference type="PDBsum" id="8YOO"/>
<dbReference type="PDBsum" id="8YOP"/>
<dbReference type="PDBsum" id="9C3H"/>
<dbReference type="PDBsum" id="9G8M"/>
<dbReference type="PDBsum" id="9GMO"/>
<dbReference type="EMDB" id="EMD-0948"/>
<dbReference type="EMDB" id="EMD-0963"/>
<dbReference type="EMDB" id="EMD-0964"/>
<dbReference type="EMDB" id="EMD-0978"/>
<dbReference type="EMDB" id="EMD-10668"/>
<dbReference type="EMDB" id="EMD-10674"/>
<dbReference type="EMDB" id="EMD-10690"/>
<dbReference type="EMDB" id="EMD-10709"/>
<dbReference type="EMDB" id="EMD-11098"/>
<dbReference type="EMDB" id="EMD-11099"/>
<dbReference type="EMDB" id="EMD-11100"/>
<dbReference type="EMDB" id="EMD-11288"/>
<dbReference type="EMDB" id="EMD-11289"/>
<dbReference type="EMDB" id="EMD-11292"/>
<dbReference type="EMDB" id="EMD-11299"/>
<dbReference type="EMDB" id="EMD-12189"/>
<dbReference type="EMDB" id="EMD-13094"/>
<dbReference type="EMDB" id="EMD-14181"/>
<dbReference type="EMDB" id="EMD-15113"/>
<dbReference type="EMDB" id="EMD-16880"/>
<dbReference type="EMDB" id="EMD-16902"/>
<dbReference type="EMDB" id="EMD-16905"/>
<dbReference type="EMDB" id="EMD-16908"/>
<dbReference type="EMDB" id="EMD-18382"/>
<dbReference type="EMDB" id="EMD-18539"/>
<dbReference type="EMDB" id="EMD-18765"/>
<dbReference type="EMDB" id="EMD-19330"/>
<dbReference type="EMDB" id="EMD-29252"/>
<dbReference type="EMDB" id="EMD-29253"/>
<dbReference type="EMDB" id="EMD-29254"/>
<dbReference type="EMDB" id="EMD-29255"/>
<dbReference type="EMDB" id="EMD-29256"/>
<dbReference type="EMDB" id="EMD-29257"/>
<dbReference type="EMDB" id="EMD-29258"/>
<dbReference type="EMDB" id="EMD-29259"/>
<dbReference type="EMDB" id="EMD-29260"/>
<dbReference type="EMDB" id="EMD-29261"/>
<dbReference type="EMDB" id="EMD-29262"/>
<dbReference type="EMDB" id="EMD-29263"/>
<dbReference type="EMDB" id="EMD-29265"/>
<dbReference type="EMDB" id="EMD-29266"/>
<dbReference type="EMDB" id="EMD-29267"/>
<dbReference type="EMDB" id="EMD-29268"/>
<dbReference type="EMDB" id="EMD-29269"/>
<dbReference type="EMDB" id="EMD-29271"/>
<dbReference type="EMDB" id="EMD-29272"/>
<dbReference type="EMDB" id="EMD-29273"/>
<dbReference type="EMDB" id="EMD-29274"/>
<dbReference type="EMDB" id="EMD-29275"/>
<dbReference type="EMDB" id="EMD-29276"/>
<dbReference type="EMDB" id="EMD-29277"/>
<dbReference type="EMDB" id="EMD-29757"/>
<dbReference type="EMDB" id="EMD-29758"/>
<dbReference type="EMDB" id="EMD-29759"/>
<dbReference type="EMDB" id="EMD-29760"/>
<dbReference type="EMDB" id="EMD-29771"/>
<dbReference type="EMDB" id="EMD-31465"/>
<dbReference type="EMDB" id="EMD-33329"/>
<dbReference type="EMDB" id="EMD-33330"/>
<dbReference type="EMDB" id="EMD-35370"/>
<dbReference type="EMDB" id="EMD-35371"/>
<dbReference type="EMDB" id="EMD-35375"/>
<dbReference type="EMDB" id="EMD-35413"/>
<dbReference type="EMDB" id="EMD-35414"/>
<dbReference type="EMDB" id="EMD-35596"/>
<dbReference type="EMDB" id="EMD-35597"/>
<dbReference type="EMDB" id="EMD-35599"/>
<dbReference type="EMDB" id="EMD-35639"/>
<dbReference type="EMDB" id="EMD-35649"/>
<dbReference type="EMDB" id="EMD-35651"/>
<dbReference type="EMDB" id="EMD-35672"/>
<dbReference type="EMDB" id="EMD-35673"/>
<dbReference type="EMDB" id="EMD-36178"/>
<dbReference type="EMDB" id="EMD-36179"/>
<dbReference type="EMDB" id="EMD-36180"/>
<dbReference type="EMDB" id="EMD-36181"/>
<dbReference type="EMDB" id="EMD-36838"/>
<dbReference type="EMDB" id="EMD-38629"/>
<dbReference type="EMDB" id="EMD-38630"/>
<dbReference type="EMDB" id="EMD-38631"/>
<dbReference type="EMDB" id="EMD-3883"/>
<dbReference type="EMDB" id="EMD-39455"/>
<dbReference type="EMDB" id="EMD-39456"/>
<dbReference type="EMDB" id="EMD-40205"/>
<dbReference type="EMDB" id="EMD-4070"/>
<dbReference type="EMDB" id="EMD-42351"/>
<dbReference type="EMDB" id="EMD-45170"/>
<dbReference type="EMDB" id="EMD-51132"/>
<dbReference type="EMDB" id="EMD-51452"/>
<dbReference type="EMDB" id="EMD-9701"/>
<dbReference type="EMDB" id="EMD-9702"/>
<dbReference type="EMDB" id="EMD-9703"/>
<dbReference type="SMR" id="Q02543"/>
<dbReference type="BioGRID" id="112062">
    <property type="interactions" value="465"/>
</dbReference>
<dbReference type="ComplexPortal" id="CPX-5183">
    <property type="entry name" value="60S cytosolic large ribosomal subunit"/>
</dbReference>
<dbReference type="ComplexPortal" id="CPX-7664">
    <property type="entry name" value="60S cytosolic large ribosomal subunit, testis-specific variant"/>
</dbReference>
<dbReference type="ComplexPortal" id="CPX-7665">
    <property type="entry name" value="60S cytosolic large ribosomal subunit, striated muscle variant"/>
</dbReference>
<dbReference type="CORUM" id="Q02543"/>
<dbReference type="FunCoup" id="Q02543">
    <property type="interactions" value="2046"/>
</dbReference>
<dbReference type="IntAct" id="Q02543">
    <property type="interactions" value="234"/>
</dbReference>
<dbReference type="MINT" id="Q02543"/>
<dbReference type="STRING" id="9606.ENSP00000222247"/>
<dbReference type="GlyCosmos" id="Q02543">
    <property type="glycosylation" value="1 site, 1 glycan"/>
</dbReference>
<dbReference type="GlyGen" id="Q02543">
    <property type="glycosylation" value="2 sites, 1 O-linked glycan (2 sites)"/>
</dbReference>
<dbReference type="iPTMnet" id="Q02543"/>
<dbReference type="MetOSite" id="Q02543"/>
<dbReference type="PhosphoSitePlus" id="Q02543"/>
<dbReference type="SwissPalm" id="Q02543"/>
<dbReference type="BioMuta" id="RPL18A"/>
<dbReference type="jPOST" id="Q02543"/>
<dbReference type="MassIVE" id="Q02543"/>
<dbReference type="PaxDb" id="9606-ENSP00000222247"/>
<dbReference type="PeptideAtlas" id="Q02543"/>
<dbReference type="ProteomicsDB" id="58108"/>
<dbReference type="Pumba" id="Q02543"/>
<dbReference type="TopDownProteomics" id="Q02543"/>
<dbReference type="Antibodypedia" id="27861">
    <property type="antibodies" value="172 antibodies from 29 providers"/>
</dbReference>
<dbReference type="DNASU" id="6142"/>
<dbReference type="Ensembl" id="ENST00000222247.10">
    <property type="protein sequence ID" value="ENSP00000222247.4"/>
    <property type="gene ID" value="ENSG00000105640.13"/>
</dbReference>
<dbReference type="GeneID" id="6142"/>
<dbReference type="KEGG" id="hsa:6142"/>
<dbReference type="MANE-Select" id="ENST00000222247.10">
    <property type="protein sequence ID" value="ENSP00000222247.4"/>
    <property type="RefSeq nucleotide sequence ID" value="NM_000980.4"/>
    <property type="RefSeq protein sequence ID" value="NP_000971.1"/>
</dbReference>
<dbReference type="UCSC" id="uc002nhp.4">
    <property type="organism name" value="human"/>
</dbReference>
<dbReference type="AGR" id="HGNC:10311"/>
<dbReference type="CTD" id="6142"/>
<dbReference type="DisGeNET" id="6142"/>
<dbReference type="GeneCards" id="RPL18A"/>
<dbReference type="HGNC" id="HGNC:10311">
    <property type="gene designation" value="RPL18A"/>
</dbReference>
<dbReference type="HPA" id="ENSG00000105640">
    <property type="expression patterns" value="Low tissue specificity"/>
</dbReference>
<dbReference type="MIM" id="604178">
    <property type="type" value="gene"/>
</dbReference>
<dbReference type="neXtProt" id="NX_Q02543"/>
<dbReference type="OpenTargets" id="ENSG00000105640"/>
<dbReference type="PharmGKB" id="PA34680"/>
<dbReference type="VEuPathDB" id="HostDB:ENSG00000105640"/>
<dbReference type="eggNOG" id="KOG0829">
    <property type="taxonomic scope" value="Eukaryota"/>
</dbReference>
<dbReference type="GeneTree" id="ENSGT00390000015797"/>
<dbReference type="HOGENOM" id="CLU_080773_2_0_1"/>
<dbReference type="InParanoid" id="Q02543"/>
<dbReference type="OMA" id="CIFAKND"/>
<dbReference type="OrthoDB" id="1294322at2759"/>
<dbReference type="PAN-GO" id="Q02543">
    <property type="GO annotations" value="1 GO annotation based on evolutionary models"/>
</dbReference>
<dbReference type="PhylomeDB" id="Q02543"/>
<dbReference type="TreeFam" id="TF300086"/>
<dbReference type="PathwayCommons" id="Q02543"/>
<dbReference type="Reactome" id="R-HSA-156827">
    <property type="pathway name" value="L13a-mediated translational silencing of Ceruloplasmin expression"/>
</dbReference>
<dbReference type="Reactome" id="R-HSA-156902">
    <property type="pathway name" value="Peptide chain elongation"/>
</dbReference>
<dbReference type="Reactome" id="R-HSA-1799339">
    <property type="pathway name" value="SRP-dependent cotranslational protein targeting to membrane"/>
</dbReference>
<dbReference type="Reactome" id="R-HSA-192823">
    <property type="pathway name" value="Viral mRNA Translation"/>
</dbReference>
<dbReference type="Reactome" id="R-HSA-2408557">
    <property type="pathway name" value="Selenocysteine synthesis"/>
</dbReference>
<dbReference type="Reactome" id="R-HSA-6791226">
    <property type="pathway name" value="Major pathway of rRNA processing in the nucleolus and cytosol"/>
</dbReference>
<dbReference type="Reactome" id="R-HSA-72689">
    <property type="pathway name" value="Formation of a pool of free 40S subunits"/>
</dbReference>
<dbReference type="Reactome" id="R-HSA-72706">
    <property type="pathway name" value="GTP hydrolysis and joining of the 60S ribosomal subunit"/>
</dbReference>
<dbReference type="Reactome" id="R-HSA-72764">
    <property type="pathway name" value="Eukaryotic Translation Termination"/>
</dbReference>
<dbReference type="Reactome" id="R-HSA-9010553">
    <property type="pathway name" value="Regulation of expression of SLITs and ROBOs"/>
</dbReference>
<dbReference type="Reactome" id="R-HSA-9633012">
    <property type="pathway name" value="Response of EIF2AK4 (GCN2) to amino acid deficiency"/>
</dbReference>
<dbReference type="Reactome" id="R-HSA-975956">
    <property type="pathway name" value="Nonsense Mediated Decay (NMD) independent of the Exon Junction Complex (EJC)"/>
</dbReference>
<dbReference type="Reactome" id="R-HSA-975957">
    <property type="pathway name" value="Nonsense Mediated Decay (NMD) enhanced by the Exon Junction Complex (EJC)"/>
</dbReference>
<dbReference type="SignaLink" id="Q02543"/>
<dbReference type="SIGNOR" id="Q02543"/>
<dbReference type="BioGRID-ORCS" id="6142">
    <property type="hits" value="838 hits in 1124 CRISPR screens"/>
</dbReference>
<dbReference type="CD-CODE" id="91857CE7">
    <property type="entry name" value="Nucleolus"/>
</dbReference>
<dbReference type="ChiTaRS" id="RPL18A">
    <property type="organism name" value="human"/>
</dbReference>
<dbReference type="GeneWiki" id="RPL18A"/>
<dbReference type="GenomeRNAi" id="6142"/>
<dbReference type="Pharos" id="Q02543">
    <property type="development level" value="Tbio"/>
</dbReference>
<dbReference type="PRO" id="PR:Q02543"/>
<dbReference type="Proteomes" id="UP000005640">
    <property type="component" value="Chromosome 19"/>
</dbReference>
<dbReference type="RNAct" id="Q02543">
    <property type="molecule type" value="protein"/>
</dbReference>
<dbReference type="Bgee" id="ENSG00000105640">
    <property type="expression patterns" value="Expressed in skin of leg and 111 other cell types or tissues"/>
</dbReference>
<dbReference type="ExpressionAtlas" id="Q02543">
    <property type="expression patterns" value="baseline and differential"/>
</dbReference>
<dbReference type="GO" id="GO:0005737">
    <property type="term" value="C:cytoplasm"/>
    <property type="evidence" value="ECO:0000303"/>
    <property type="project" value="ComplexPortal"/>
</dbReference>
<dbReference type="GO" id="GO:0005829">
    <property type="term" value="C:cytosol"/>
    <property type="evidence" value="ECO:0000304"/>
    <property type="project" value="Reactome"/>
</dbReference>
<dbReference type="GO" id="GO:0022625">
    <property type="term" value="C:cytosolic large ribosomal subunit"/>
    <property type="evidence" value="ECO:0000314"/>
    <property type="project" value="UniProtKB"/>
</dbReference>
<dbReference type="GO" id="GO:0022626">
    <property type="term" value="C:cytosolic ribosome"/>
    <property type="evidence" value="ECO:0000314"/>
    <property type="project" value="FlyBase"/>
</dbReference>
<dbReference type="GO" id="GO:0016020">
    <property type="term" value="C:membrane"/>
    <property type="evidence" value="ECO:0007005"/>
    <property type="project" value="UniProtKB"/>
</dbReference>
<dbReference type="GO" id="GO:0014069">
    <property type="term" value="C:postsynaptic density"/>
    <property type="evidence" value="ECO:0007669"/>
    <property type="project" value="Ensembl"/>
</dbReference>
<dbReference type="GO" id="GO:0003723">
    <property type="term" value="F:RNA binding"/>
    <property type="evidence" value="ECO:0007005"/>
    <property type="project" value="UniProtKB"/>
</dbReference>
<dbReference type="GO" id="GO:0003735">
    <property type="term" value="F:structural constituent of ribosome"/>
    <property type="evidence" value="ECO:0000314"/>
    <property type="project" value="UniProtKB"/>
</dbReference>
<dbReference type="GO" id="GO:0002181">
    <property type="term" value="P:cytoplasmic translation"/>
    <property type="evidence" value="ECO:0000314"/>
    <property type="project" value="UniProtKB"/>
</dbReference>
<dbReference type="GO" id="GO:0006412">
    <property type="term" value="P:translation"/>
    <property type="evidence" value="ECO:0000304"/>
    <property type="project" value="ProtInc"/>
</dbReference>
<dbReference type="FunFam" id="3.10.20.10:FF:000001">
    <property type="entry name" value="60S ribosomal protein L18a"/>
    <property type="match status" value="1"/>
</dbReference>
<dbReference type="FunFam" id="3.10.20.10:FF:000002">
    <property type="entry name" value="60S ribosomal protein L18a"/>
    <property type="match status" value="1"/>
</dbReference>
<dbReference type="Gene3D" id="3.10.20.10">
    <property type="match status" value="2"/>
</dbReference>
<dbReference type="HAMAP" id="MF_00273">
    <property type="entry name" value="Ribosomal_eL20"/>
    <property type="match status" value="1"/>
</dbReference>
<dbReference type="InterPro" id="IPR028877">
    <property type="entry name" value="Ribosomal_eL20"/>
</dbReference>
<dbReference type="InterPro" id="IPR023573">
    <property type="entry name" value="Ribosomal_eL20_dom"/>
</dbReference>
<dbReference type="InterPro" id="IPR021138">
    <property type="entry name" value="Ribosomal_eL20_eukaryotes"/>
</dbReference>
<dbReference type="PANTHER" id="PTHR10052">
    <property type="entry name" value="60S RIBOSOMAL PROTEIN L18A"/>
    <property type="match status" value="1"/>
</dbReference>
<dbReference type="Pfam" id="PF01775">
    <property type="entry name" value="Ribosomal_L18A"/>
    <property type="match status" value="1"/>
</dbReference>
<dbReference type="PIRSF" id="PIRSF002190">
    <property type="entry name" value="Ribosomal_L18a"/>
    <property type="match status" value="1"/>
</dbReference>
<dbReference type="SUPFAM" id="SSF160374">
    <property type="entry name" value="RplX-like"/>
    <property type="match status" value="1"/>
</dbReference>